<proteinExistence type="inferred from homology"/>
<feature type="chain" id="PRO_1000010707" description="Elongation factor P">
    <location>
        <begin position="1"/>
        <end position="185"/>
    </location>
</feature>
<evidence type="ECO:0000255" key="1">
    <source>
        <dbReference type="HAMAP-Rule" id="MF_00141"/>
    </source>
</evidence>
<keyword id="KW-0963">Cytoplasm</keyword>
<keyword id="KW-0251">Elongation factor</keyword>
<keyword id="KW-0648">Protein biosynthesis</keyword>
<accession>A4XJ18</accession>
<comment type="function">
    <text evidence="1">Involved in peptide bond synthesis. Stimulates efficient translation and peptide-bond synthesis on native or reconstituted 70S ribosomes in vitro. Probably functions indirectly by altering the affinity of the ribosome for aminoacyl-tRNA, thus increasing their reactivity as acceptors for peptidyl transferase.</text>
</comment>
<comment type="pathway">
    <text evidence="1">Protein biosynthesis; polypeptide chain elongation.</text>
</comment>
<comment type="subcellular location">
    <subcellularLocation>
        <location evidence="1">Cytoplasm</location>
    </subcellularLocation>
</comment>
<comment type="similarity">
    <text evidence="1">Belongs to the elongation factor P family.</text>
</comment>
<reference key="1">
    <citation type="submission" date="2007-04" db="EMBL/GenBank/DDBJ databases">
        <title>Genome sequence of the thermophilic hydrogen-producing bacterium Caldicellulosiruptor saccharolyticus DSM 8903.</title>
        <authorList>
            <person name="Copeland A."/>
            <person name="Lucas S."/>
            <person name="Lapidus A."/>
            <person name="Barry K."/>
            <person name="Detter J.C."/>
            <person name="Glavina del Rio T."/>
            <person name="Hammon N."/>
            <person name="Israni S."/>
            <person name="Dalin E."/>
            <person name="Tice H."/>
            <person name="Pitluck S."/>
            <person name="Kiss H."/>
            <person name="Brettin T."/>
            <person name="Bruce D."/>
            <person name="Han C."/>
            <person name="Schmutz J."/>
            <person name="Larimer F."/>
            <person name="Land M."/>
            <person name="Hauser L."/>
            <person name="Kyrpides N."/>
            <person name="Lykidis A."/>
            <person name="van de Werken H.J.G."/>
            <person name="Verhaart M.R.A."/>
            <person name="VanFossen A.L."/>
            <person name="Lewis D.L."/>
            <person name="Nichols J.D."/>
            <person name="Goorissen H.P."/>
            <person name="van Niel E.W.J."/>
            <person name="Stams F.J.M."/>
            <person name="Willquist K.U."/>
            <person name="Ward D.E."/>
            <person name="van der Oost J."/>
            <person name="Kelly R.M."/>
            <person name="Kengen S.M.W."/>
            <person name="Richardson P."/>
        </authorList>
    </citation>
    <scope>NUCLEOTIDE SEQUENCE [LARGE SCALE GENOMIC DNA]</scope>
    <source>
        <strain>ATCC 43494 / DSM 8903 / Tp8T 6331</strain>
    </source>
</reference>
<organism>
    <name type="scientific">Caldicellulosiruptor saccharolyticus (strain ATCC 43494 / DSM 8903 / Tp8T 6331)</name>
    <dbReference type="NCBI Taxonomy" id="351627"/>
    <lineage>
        <taxon>Bacteria</taxon>
        <taxon>Bacillati</taxon>
        <taxon>Bacillota</taxon>
        <taxon>Bacillota incertae sedis</taxon>
        <taxon>Caldicellulosiruptorales</taxon>
        <taxon>Caldicellulosiruptoraceae</taxon>
        <taxon>Caldicellulosiruptor</taxon>
    </lineage>
</organism>
<name>EFP_CALS8</name>
<gene>
    <name evidence="1" type="primary">efp</name>
    <name type="ordered locus">Csac_1301</name>
</gene>
<protein>
    <recommendedName>
        <fullName evidence="1">Elongation factor P</fullName>
        <shortName evidence="1">EF-P</shortName>
    </recommendedName>
</protein>
<sequence length="185" mass="20957">MVEAGDFRRGLTIEYDGQIFQVIEFLHVKPGKGAAFVRTKLKNIKTGAVIEKTFRPDERMPLAHIERREMQYLYNDGELYYFMDTQTYEQIALNQEMVGDALKFVKENMTVTILSHNGSVFGVEPPRFVELEVIDTEPGFKGDTQTGATKPAKVETGAVIQVPLFINVGDKIKIDTSTEEYLSRV</sequence>
<dbReference type="EMBL" id="CP000679">
    <property type="protein sequence ID" value="ABP66903.1"/>
    <property type="molecule type" value="Genomic_DNA"/>
</dbReference>
<dbReference type="RefSeq" id="WP_011916839.1">
    <property type="nucleotide sequence ID" value="NC_009437.1"/>
</dbReference>
<dbReference type="SMR" id="A4XJ18"/>
<dbReference type="STRING" id="351627.Csac_1301"/>
<dbReference type="KEGG" id="csc:Csac_1301"/>
<dbReference type="eggNOG" id="COG0231">
    <property type="taxonomic scope" value="Bacteria"/>
</dbReference>
<dbReference type="HOGENOM" id="CLU_074944_0_1_9"/>
<dbReference type="OrthoDB" id="9801844at2"/>
<dbReference type="UniPathway" id="UPA00345"/>
<dbReference type="Proteomes" id="UP000000256">
    <property type="component" value="Chromosome"/>
</dbReference>
<dbReference type="GO" id="GO:0005737">
    <property type="term" value="C:cytoplasm"/>
    <property type="evidence" value="ECO:0007669"/>
    <property type="project" value="UniProtKB-SubCell"/>
</dbReference>
<dbReference type="GO" id="GO:0003746">
    <property type="term" value="F:translation elongation factor activity"/>
    <property type="evidence" value="ECO:0007669"/>
    <property type="project" value="UniProtKB-UniRule"/>
</dbReference>
<dbReference type="GO" id="GO:0043043">
    <property type="term" value="P:peptide biosynthetic process"/>
    <property type="evidence" value="ECO:0007669"/>
    <property type="project" value="InterPro"/>
</dbReference>
<dbReference type="CDD" id="cd04470">
    <property type="entry name" value="S1_EF-P_repeat_1"/>
    <property type="match status" value="1"/>
</dbReference>
<dbReference type="CDD" id="cd05794">
    <property type="entry name" value="S1_EF-P_repeat_2"/>
    <property type="match status" value="1"/>
</dbReference>
<dbReference type="FunFam" id="2.30.30.30:FF:000003">
    <property type="entry name" value="Elongation factor P"/>
    <property type="match status" value="1"/>
</dbReference>
<dbReference type="FunFam" id="2.40.50.140:FF:000004">
    <property type="entry name" value="Elongation factor P"/>
    <property type="match status" value="1"/>
</dbReference>
<dbReference type="FunFam" id="2.40.50.140:FF:000009">
    <property type="entry name" value="Elongation factor P"/>
    <property type="match status" value="1"/>
</dbReference>
<dbReference type="Gene3D" id="2.30.30.30">
    <property type="match status" value="1"/>
</dbReference>
<dbReference type="Gene3D" id="2.40.50.140">
    <property type="entry name" value="Nucleic acid-binding proteins"/>
    <property type="match status" value="2"/>
</dbReference>
<dbReference type="HAMAP" id="MF_00141">
    <property type="entry name" value="EF_P"/>
    <property type="match status" value="1"/>
</dbReference>
<dbReference type="InterPro" id="IPR015365">
    <property type="entry name" value="Elong-fact-P_C"/>
</dbReference>
<dbReference type="InterPro" id="IPR012340">
    <property type="entry name" value="NA-bd_OB-fold"/>
</dbReference>
<dbReference type="InterPro" id="IPR014722">
    <property type="entry name" value="Rib_uL2_dom2"/>
</dbReference>
<dbReference type="InterPro" id="IPR020599">
    <property type="entry name" value="Transl_elong_fac_P/YeiP"/>
</dbReference>
<dbReference type="InterPro" id="IPR013185">
    <property type="entry name" value="Transl_elong_KOW-like"/>
</dbReference>
<dbReference type="InterPro" id="IPR001059">
    <property type="entry name" value="Transl_elong_P/YeiP_cen"/>
</dbReference>
<dbReference type="InterPro" id="IPR013852">
    <property type="entry name" value="Transl_elong_P/YeiP_CS"/>
</dbReference>
<dbReference type="InterPro" id="IPR011768">
    <property type="entry name" value="Transl_elongation_fac_P"/>
</dbReference>
<dbReference type="InterPro" id="IPR008991">
    <property type="entry name" value="Translation_prot_SH3-like_sf"/>
</dbReference>
<dbReference type="NCBIfam" id="TIGR00038">
    <property type="entry name" value="efp"/>
    <property type="match status" value="1"/>
</dbReference>
<dbReference type="NCBIfam" id="NF001810">
    <property type="entry name" value="PRK00529.1"/>
    <property type="match status" value="1"/>
</dbReference>
<dbReference type="PANTHER" id="PTHR30053">
    <property type="entry name" value="ELONGATION FACTOR P"/>
    <property type="match status" value="1"/>
</dbReference>
<dbReference type="PANTHER" id="PTHR30053:SF12">
    <property type="entry name" value="ELONGATION FACTOR P (EF-P) FAMILY PROTEIN"/>
    <property type="match status" value="1"/>
</dbReference>
<dbReference type="Pfam" id="PF01132">
    <property type="entry name" value="EFP"/>
    <property type="match status" value="1"/>
</dbReference>
<dbReference type="Pfam" id="PF08207">
    <property type="entry name" value="EFP_N"/>
    <property type="match status" value="1"/>
</dbReference>
<dbReference type="Pfam" id="PF09285">
    <property type="entry name" value="Elong-fact-P_C"/>
    <property type="match status" value="1"/>
</dbReference>
<dbReference type="PIRSF" id="PIRSF005901">
    <property type="entry name" value="EF-P"/>
    <property type="match status" value="1"/>
</dbReference>
<dbReference type="SMART" id="SM01185">
    <property type="entry name" value="EFP"/>
    <property type="match status" value="1"/>
</dbReference>
<dbReference type="SMART" id="SM00841">
    <property type="entry name" value="Elong-fact-P_C"/>
    <property type="match status" value="1"/>
</dbReference>
<dbReference type="SUPFAM" id="SSF50249">
    <property type="entry name" value="Nucleic acid-binding proteins"/>
    <property type="match status" value="2"/>
</dbReference>
<dbReference type="SUPFAM" id="SSF50104">
    <property type="entry name" value="Translation proteins SH3-like domain"/>
    <property type="match status" value="1"/>
</dbReference>
<dbReference type="PROSITE" id="PS01275">
    <property type="entry name" value="EFP"/>
    <property type="match status" value="1"/>
</dbReference>